<protein>
    <recommendedName>
        <fullName evidence="1">Small ribosomal subunit protein uS3</fullName>
    </recommendedName>
    <alternativeName>
        <fullName evidence="2">30S ribosomal protein S3</fullName>
    </alternativeName>
</protein>
<gene>
    <name evidence="1" type="primary">rpsC</name>
    <name type="ordered locus">Patl_0475</name>
</gene>
<feature type="chain" id="PRO_0000293855" description="Small ribosomal subunit protein uS3">
    <location>
        <begin position="1"/>
        <end position="232"/>
    </location>
</feature>
<feature type="domain" description="KH type-2" evidence="1">
    <location>
        <begin position="39"/>
        <end position="107"/>
    </location>
</feature>
<keyword id="KW-0687">Ribonucleoprotein</keyword>
<keyword id="KW-0689">Ribosomal protein</keyword>
<keyword id="KW-0694">RNA-binding</keyword>
<keyword id="KW-0699">rRNA-binding</keyword>
<reference key="1">
    <citation type="submission" date="2006-06" db="EMBL/GenBank/DDBJ databases">
        <title>Complete sequence of Pseudoalteromonas atlantica T6c.</title>
        <authorList>
            <consortium name="US DOE Joint Genome Institute"/>
            <person name="Copeland A."/>
            <person name="Lucas S."/>
            <person name="Lapidus A."/>
            <person name="Barry K."/>
            <person name="Detter J.C."/>
            <person name="Glavina del Rio T."/>
            <person name="Hammon N."/>
            <person name="Israni S."/>
            <person name="Dalin E."/>
            <person name="Tice H."/>
            <person name="Pitluck S."/>
            <person name="Saunders E."/>
            <person name="Brettin T."/>
            <person name="Bruce D."/>
            <person name="Han C."/>
            <person name="Tapia R."/>
            <person name="Gilna P."/>
            <person name="Schmutz J."/>
            <person name="Larimer F."/>
            <person name="Land M."/>
            <person name="Hauser L."/>
            <person name="Kyrpides N."/>
            <person name="Kim E."/>
            <person name="Karls A.C."/>
            <person name="Bartlett D."/>
            <person name="Higgins B.P."/>
            <person name="Richardson P."/>
        </authorList>
    </citation>
    <scope>NUCLEOTIDE SEQUENCE [LARGE SCALE GENOMIC DNA]</scope>
    <source>
        <strain>T6c / ATCC BAA-1087</strain>
    </source>
</reference>
<name>RS3_PSEA6</name>
<evidence type="ECO:0000255" key="1">
    <source>
        <dbReference type="HAMAP-Rule" id="MF_01309"/>
    </source>
</evidence>
<evidence type="ECO:0000305" key="2"/>
<dbReference type="EMBL" id="CP000388">
    <property type="protein sequence ID" value="ABG39005.1"/>
    <property type="molecule type" value="Genomic_DNA"/>
</dbReference>
<dbReference type="RefSeq" id="WP_006992674.1">
    <property type="nucleotide sequence ID" value="NC_008228.1"/>
</dbReference>
<dbReference type="SMR" id="Q15YN3"/>
<dbReference type="STRING" id="342610.Patl_0475"/>
<dbReference type="KEGG" id="pat:Patl_0475"/>
<dbReference type="eggNOG" id="COG0092">
    <property type="taxonomic scope" value="Bacteria"/>
</dbReference>
<dbReference type="HOGENOM" id="CLU_058591_0_2_6"/>
<dbReference type="OrthoDB" id="9806396at2"/>
<dbReference type="Proteomes" id="UP000001981">
    <property type="component" value="Chromosome"/>
</dbReference>
<dbReference type="GO" id="GO:0022627">
    <property type="term" value="C:cytosolic small ribosomal subunit"/>
    <property type="evidence" value="ECO:0007669"/>
    <property type="project" value="TreeGrafter"/>
</dbReference>
<dbReference type="GO" id="GO:0003729">
    <property type="term" value="F:mRNA binding"/>
    <property type="evidence" value="ECO:0007669"/>
    <property type="project" value="UniProtKB-UniRule"/>
</dbReference>
<dbReference type="GO" id="GO:0019843">
    <property type="term" value="F:rRNA binding"/>
    <property type="evidence" value="ECO:0007669"/>
    <property type="project" value="UniProtKB-UniRule"/>
</dbReference>
<dbReference type="GO" id="GO:0003735">
    <property type="term" value="F:structural constituent of ribosome"/>
    <property type="evidence" value="ECO:0007669"/>
    <property type="project" value="InterPro"/>
</dbReference>
<dbReference type="GO" id="GO:0006412">
    <property type="term" value="P:translation"/>
    <property type="evidence" value="ECO:0007669"/>
    <property type="project" value="UniProtKB-UniRule"/>
</dbReference>
<dbReference type="CDD" id="cd02412">
    <property type="entry name" value="KH-II_30S_S3"/>
    <property type="match status" value="1"/>
</dbReference>
<dbReference type="FunFam" id="3.30.1140.32:FF:000001">
    <property type="entry name" value="30S ribosomal protein S3"/>
    <property type="match status" value="1"/>
</dbReference>
<dbReference type="FunFam" id="3.30.300.20:FF:000001">
    <property type="entry name" value="30S ribosomal protein S3"/>
    <property type="match status" value="1"/>
</dbReference>
<dbReference type="Gene3D" id="3.30.300.20">
    <property type="match status" value="1"/>
</dbReference>
<dbReference type="Gene3D" id="3.30.1140.32">
    <property type="entry name" value="Ribosomal protein S3, C-terminal domain"/>
    <property type="match status" value="1"/>
</dbReference>
<dbReference type="HAMAP" id="MF_01309_B">
    <property type="entry name" value="Ribosomal_uS3_B"/>
    <property type="match status" value="1"/>
</dbReference>
<dbReference type="InterPro" id="IPR004087">
    <property type="entry name" value="KH_dom"/>
</dbReference>
<dbReference type="InterPro" id="IPR015946">
    <property type="entry name" value="KH_dom-like_a/b"/>
</dbReference>
<dbReference type="InterPro" id="IPR004044">
    <property type="entry name" value="KH_dom_type_2"/>
</dbReference>
<dbReference type="InterPro" id="IPR009019">
    <property type="entry name" value="KH_sf_prok-type"/>
</dbReference>
<dbReference type="InterPro" id="IPR036419">
    <property type="entry name" value="Ribosomal_S3_C_sf"/>
</dbReference>
<dbReference type="InterPro" id="IPR005704">
    <property type="entry name" value="Ribosomal_uS3_bac-typ"/>
</dbReference>
<dbReference type="InterPro" id="IPR001351">
    <property type="entry name" value="Ribosomal_uS3_C"/>
</dbReference>
<dbReference type="InterPro" id="IPR018280">
    <property type="entry name" value="Ribosomal_uS3_CS"/>
</dbReference>
<dbReference type="NCBIfam" id="TIGR01009">
    <property type="entry name" value="rpsC_bact"/>
    <property type="match status" value="1"/>
</dbReference>
<dbReference type="PANTHER" id="PTHR11760">
    <property type="entry name" value="30S/40S RIBOSOMAL PROTEIN S3"/>
    <property type="match status" value="1"/>
</dbReference>
<dbReference type="PANTHER" id="PTHR11760:SF19">
    <property type="entry name" value="SMALL RIBOSOMAL SUBUNIT PROTEIN US3C"/>
    <property type="match status" value="1"/>
</dbReference>
<dbReference type="Pfam" id="PF07650">
    <property type="entry name" value="KH_2"/>
    <property type="match status" value="1"/>
</dbReference>
<dbReference type="Pfam" id="PF00189">
    <property type="entry name" value="Ribosomal_S3_C"/>
    <property type="match status" value="1"/>
</dbReference>
<dbReference type="SMART" id="SM00322">
    <property type="entry name" value="KH"/>
    <property type="match status" value="1"/>
</dbReference>
<dbReference type="SUPFAM" id="SSF54814">
    <property type="entry name" value="Prokaryotic type KH domain (KH-domain type II)"/>
    <property type="match status" value="1"/>
</dbReference>
<dbReference type="SUPFAM" id="SSF54821">
    <property type="entry name" value="Ribosomal protein S3 C-terminal domain"/>
    <property type="match status" value="1"/>
</dbReference>
<dbReference type="PROSITE" id="PS50823">
    <property type="entry name" value="KH_TYPE_2"/>
    <property type="match status" value="1"/>
</dbReference>
<dbReference type="PROSITE" id="PS00548">
    <property type="entry name" value="RIBOSOMAL_S3"/>
    <property type="match status" value="1"/>
</dbReference>
<accession>Q15YN3</accession>
<organism>
    <name type="scientific">Pseudoalteromonas atlantica (strain T6c / ATCC BAA-1087)</name>
    <dbReference type="NCBI Taxonomy" id="3042615"/>
    <lineage>
        <taxon>Bacteria</taxon>
        <taxon>Pseudomonadati</taxon>
        <taxon>Pseudomonadota</taxon>
        <taxon>Gammaproteobacteria</taxon>
        <taxon>Alteromonadales</taxon>
        <taxon>Alteromonadaceae</taxon>
        <taxon>Paraglaciecola</taxon>
    </lineage>
</organism>
<sequence length="232" mass="25728">MGQKVHPTGIRLGISKPWTSTWYANTADYADNLFNDHQVRQYLTKALKTASLSKIVIERPAKSIRVTIHTARPGVVIGKKGEDVEKLRKHVSKLAGVPAQINIAEVRKPELDGQLVADSIASQLERRVMFRRAMKRAVQNAMRIGAKGIKVQVSGRLGGAEIARAEWYREGRVPLHTFRADIDYATSEANTTYGIIGVKVWIFKGEVLGGLPLTQEQPAQPKKKGRSPKREG</sequence>
<proteinExistence type="inferred from homology"/>
<comment type="function">
    <text evidence="1">Binds the lower part of the 30S subunit head. Binds mRNA in the 70S ribosome, positioning it for translation.</text>
</comment>
<comment type="subunit">
    <text evidence="1">Part of the 30S ribosomal subunit. Forms a tight complex with proteins S10 and S14.</text>
</comment>
<comment type="similarity">
    <text evidence="1">Belongs to the universal ribosomal protein uS3 family.</text>
</comment>